<evidence type="ECO:0000250" key="1"/>
<evidence type="ECO:0000250" key="2">
    <source>
        <dbReference type="UniProtKB" id="P0CI24"/>
    </source>
</evidence>
<evidence type="ECO:0000255" key="3"/>
<evidence type="ECO:0000305" key="4"/>
<evidence type="ECO:0000305" key="5">
    <source>
    </source>
</evidence>
<proteinExistence type="inferred from homology"/>
<accession>Q9BPH7</accession>
<organism>
    <name type="scientific">Conus ventricosus</name>
    <name type="common">Mediterranean cone</name>
    <dbReference type="NCBI Taxonomy" id="117992"/>
    <lineage>
        <taxon>Eukaryota</taxon>
        <taxon>Metazoa</taxon>
        <taxon>Spiralia</taxon>
        <taxon>Lophotrochozoa</taxon>
        <taxon>Mollusca</taxon>
        <taxon>Gastropoda</taxon>
        <taxon>Caenogastropoda</taxon>
        <taxon>Neogastropoda</taxon>
        <taxon>Conoidea</taxon>
        <taxon>Conidae</taxon>
        <taxon>Conus</taxon>
        <taxon>Lautoconus</taxon>
    </lineage>
</organism>
<name>M235_CONVE</name>
<protein>
    <recommendedName>
        <fullName>Conotoxin VnMLKM-04</fullName>
    </recommendedName>
</protein>
<reference key="1">
    <citation type="journal article" date="2001" name="Mol. Biol. Evol.">
        <title>Mechanisms for evolving hypervariability: the case of conopeptides.</title>
        <authorList>
            <person name="Conticello S.G."/>
            <person name="Gilad Y."/>
            <person name="Avidan N."/>
            <person name="Ben-Asher E."/>
            <person name="Levy Z."/>
            <person name="Fainzilber M."/>
        </authorList>
    </citation>
    <scope>NUCLEOTIDE SEQUENCE [MRNA]</scope>
    <source>
        <tissue>Venom duct</tissue>
    </source>
</reference>
<dbReference type="EMBL" id="AF214948">
    <property type="protein sequence ID" value="AAG60376.1"/>
    <property type="molecule type" value="mRNA"/>
</dbReference>
<dbReference type="TCDB" id="8.B.28.1.7">
    <property type="family name" value="the mu-conotoxin (mu-conotoxin) family"/>
</dbReference>
<dbReference type="ConoServer" id="635">
    <property type="toxin name" value="Vn3.5 precursor"/>
</dbReference>
<dbReference type="GO" id="GO:0005576">
    <property type="term" value="C:extracellular region"/>
    <property type="evidence" value="ECO:0007669"/>
    <property type="project" value="UniProtKB-SubCell"/>
</dbReference>
<dbReference type="GO" id="GO:0008200">
    <property type="term" value="F:ion channel inhibitor activity"/>
    <property type="evidence" value="ECO:0007669"/>
    <property type="project" value="InterPro"/>
</dbReference>
<dbReference type="GO" id="GO:0090729">
    <property type="term" value="F:toxin activity"/>
    <property type="evidence" value="ECO:0007669"/>
    <property type="project" value="UniProtKB-KW"/>
</dbReference>
<dbReference type="InterPro" id="IPR004214">
    <property type="entry name" value="Conotoxin"/>
</dbReference>
<dbReference type="Pfam" id="PF02950">
    <property type="entry name" value="Conotoxin"/>
    <property type="match status" value="1"/>
</dbReference>
<comment type="subcellular location">
    <subcellularLocation>
        <location evidence="5">Secreted</location>
    </subcellularLocation>
</comment>
<comment type="tissue specificity">
    <text evidence="5">Expressed by the venom duct.</text>
</comment>
<comment type="domain">
    <text evidence="4">The cysteine framework is III (CC-C-C-CC). Classified in the M-2 branch, since 2 residues stand between the fourth and the fifth cysteine residues.</text>
</comment>
<comment type="similarity">
    <text evidence="4">Belongs to the conotoxin M superfamily.</text>
</comment>
<feature type="signal peptide" evidence="3">
    <location>
        <begin position="1"/>
        <end position="24"/>
    </location>
</feature>
<feature type="propeptide" id="PRO_0000404906" evidence="1">
    <location>
        <begin position="25"/>
        <end position="51"/>
    </location>
</feature>
<feature type="peptide" id="PRO_0000404907" description="Conotoxin VnMLKM-04">
    <location>
        <begin position="52"/>
        <end position="69"/>
    </location>
</feature>
<feature type="disulfide bond" evidence="2">
    <location>
        <begin position="55"/>
        <end position="69"/>
    </location>
</feature>
<feature type="disulfide bond" evidence="2">
    <location>
        <begin position="56"/>
        <end position="65"/>
    </location>
</feature>
<feature type="disulfide bond" evidence="2">
    <location>
        <begin position="61"/>
        <end position="68"/>
    </location>
</feature>
<keyword id="KW-1015">Disulfide bond</keyword>
<keyword id="KW-0528">Neurotoxin</keyword>
<keyword id="KW-0964">Secreted</keyword>
<keyword id="KW-0732">Signal</keyword>
<keyword id="KW-0800">Toxin</keyword>
<sequence>MLKMGVVLFIFLVLFTLATLQLDADQPVERYAENKRLMSPYKRRAILHAPREQECCEPQWCDGGCDACC</sequence>